<evidence type="ECO:0000255" key="1">
    <source>
        <dbReference type="HAMAP-Rule" id="MF_00688"/>
    </source>
</evidence>
<keyword id="KW-0012">Acyltransferase</keyword>
<keyword id="KW-0963">Cytoplasm</keyword>
<keyword id="KW-1185">Reference proteome</keyword>
<keyword id="KW-0808">Transferase</keyword>
<accession>Q2IP38</accession>
<proteinExistence type="inferred from homology"/>
<protein>
    <recommendedName>
        <fullName evidence="1">Leucyl/phenylalanyl-tRNA--protein transferase</fullName>
        <ecNumber evidence="1">2.3.2.6</ecNumber>
    </recommendedName>
    <alternativeName>
        <fullName evidence="1">L/F-transferase</fullName>
    </alternativeName>
    <alternativeName>
        <fullName evidence="1">Leucyltransferase</fullName>
    </alternativeName>
    <alternativeName>
        <fullName evidence="1">Phenyalanyltransferase</fullName>
    </alternativeName>
</protein>
<gene>
    <name evidence="1" type="primary">aat</name>
    <name type="ordered locus">Adeh_0792</name>
</gene>
<name>LFTR_ANADE</name>
<organism>
    <name type="scientific">Anaeromyxobacter dehalogenans (strain 2CP-C)</name>
    <dbReference type="NCBI Taxonomy" id="290397"/>
    <lineage>
        <taxon>Bacteria</taxon>
        <taxon>Pseudomonadati</taxon>
        <taxon>Myxococcota</taxon>
        <taxon>Myxococcia</taxon>
        <taxon>Myxococcales</taxon>
        <taxon>Cystobacterineae</taxon>
        <taxon>Anaeromyxobacteraceae</taxon>
        <taxon>Anaeromyxobacter</taxon>
    </lineage>
</organism>
<comment type="function">
    <text evidence="1">Functions in the N-end rule pathway of protein degradation where it conjugates Leu, Phe and, less efficiently, Met from aminoacyl-tRNAs to the N-termini of proteins containing an N-terminal arginine or lysine.</text>
</comment>
<comment type="catalytic activity">
    <reaction evidence="1">
        <text>N-terminal L-lysyl-[protein] + L-leucyl-tRNA(Leu) = N-terminal L-leucyl-L-lysyl-[protein] + tRNA(Leu) + H(+)</text>
        <dbReference type="Rhea" id="RHEA:12340"/>
        <dbReference type="Rhea" id="RHEA-COMP:9613"/>
        <dbReference type="Rhea" id="RHEA-COMP:9622"/>
        <dbReference type="Rhea" id="RHEA-COMP:12670"/>
        <dbReference type="Rhea" id="RHEA-COMP:12671"/>
        <dbReference type="ChEBI" id="CHEBI:15378"/>
        <dbReference type="ChEBI" id="CHEBI:65249"/>
        <dbReference type="ChEBI" id="CHEBI:78442"/>
        <dbReference type="ChEBI" id="CHEBI:78494"/>
        <dbReference type="ChEBI" id="CHEBI:133043"/>
        <dbReference type="EC" id="2.3.2.6"/>
    </reaction>
</comment>
<comment type="catalytic activity">
    <reaction evidence="1">
        <text>N-terminal L-arginyl-[protein] + L-leucyl-tRNA(Leu) = N-terminal L-leucyl-L-arginyl-[protein] + tRNA(Leu) + H(+)</text>
        <dbReference type="Rhea" id="RHEA:50416"/>
        <dbReference type="Rhea" id="RHEA-COMP:9613"/>
        <dbReference type="Rhea" id="RHEA-COMP:9622"/>
        <dbReference type="Rhea" id="RHEA-COMP:12672"/>
        <dbReference type="Rhea" id="RHEA-COMP:12673"/>
        <dbReference type="ChEBI" id="CHEBI:15378"/>
        <dbReference type="ChEBI" id="CHEBI:64719"/>
        <dbReference type="ChEBI" id="CHEBI:78442"/>
        <dbReference type="ChEBI" id="CHEBI:78494"/>
        <dbReference type="ChEBI" id="CHEBI:133044"/>
        <dbReference type="EC" id="2.3.2.6"/>
    </reaction>
</comment>
<comment type="catalytic activity">
    <reaction evidence="1">
        <text>L-phenylalanyl-tRNA(Phe) + an N-terminal L-alpha-aminoacyl-[protein] = an N-terminal L-phenylalanyl-L-alpha-aminoacyl-[protein] + tRNA(Phe)</text>
        <dbReference type="Rhea" id="RHEA:43632"/>
        <dbReference type="Rhea" id="RHEA-COMP:9668"/>
        <dbReference type="Rhea" id="RHEA-COMP:9699"/>
        <dbReference type="Rhea" id="RHEA-COMP:10636"/>
        <dbReference type="Rhea" id="RHEA-COMP:10637"/>
        <dbReference type="ChEBI" id="CHEBI:78442"/>
        <dbReference type="ChEBI" id="CHEBI:78531"/>
        <dbReference type="ChEBI" id="CHEBI:78597"/>
        <dbReference type="ChEBI" id="CHEBI:83561"/>
        <dbReference type="EC" id="2.3.2.6"/>
    </reaction>
</comment>
<comment type="subcellular location">
    <subcellularLocation>
        <location evidence="1">Cytoplasm</location>
    </subcellularLocation>
</comment>
<comment type="similarity">
    <text evidence="1">Belongs to the L/F-transferase family.</text>
</comment>
<dbReference type="EC" id="2.3.2.6" evidence="1"/>
<dbReference type="EMBL" id="CP000251">
    <property type="protein sequence ID" value="ABC80567.1"/>
    <property type="molecule type" value="Genomic_DNA"/>
</dbReference>
<dbReference type="RefSeq" id="WP_011419850.1">
    <property type="nucleotide sequence ID" value="NC_007760.1"/>
</dbReference>
<dbReference type="SMR" id="Q2IP38"/>
<dbReference type="STRING" id="290397.Adeh_0792"/>
<dbReference type="KEGG" id="ade:Adeh_0792"/>
<dbReference type="eggNOG" id="COG2360">
    <property type="taxonomic scope" value="Bacteria"/>
</dbReference>
<dbReference type="HOGENOM" id="CLU_075045_0_0_7"/>
<dbReference type="OrthoDB" id="9790282at2"/>
<dbReference type="Proteomes" id="UP000001935">
    <property type="component" value="Chromosome"/>
</dbReference>
<dbReference type="GO" id="GO:0005737">
    <property type="term" value="C:cytoplasm"/>
    <property type="evidence" value="ECO:0007669"/>
    <property type="project" value="UniProtKB-SubCell"/>
</dbReference>
<dbReference type="GO" id="GO:0008914">
    <property type="term" value="F:leucyl-tRNA--protein transferase activity"/>
    <property type="evidence" value="ECO:0007669"/>
    <property type="project" value="UniProtKB-UniRule"/>
</dbReference>
<dbReference type="GO" id="GO:0030163">
    <property type="term" value="P:protein catabolic process"/>
    <property type="evidence" value="ECO:0007669"/>
    <property type="project" value="UniProtKB-UniRule"/>
</dbReference>
<dbReference type="FunFam" id="3.30.70.3550:FF:000001">
    <property type="entry name" value="Leucyl/phenylalanyl-tRNA--protein transferase"/>
    <property type="match status" value="1"/>
</dbReference>
<dbReference type="FunFam" id="3.40.630.70:FF:000001">
    <property type="entry name" value="Leucyl/phenylalanyl-tRNA--protein transferase"/>
    <property type="match status" value="1"/>
</dbReference>
<dbReference type="Gene3D" id="3.40.630.70">
    <property type="entry name" value="Leucyl/phenylalanyl-tRNA-protein transferase, C-terminal domain"/>
    <property type="match status" value="1"/>
</dbReference>
<dbReference type="Gene3D" id="3.30.70.3550">
    <property type="entry name" value="Leucyl/phenylalanyl-tRNA-protein transferase, N-terminal domain"/>
    <property type="match status" value="1"/>
</dbReference>
<dbReference type="HAMAP" id="MF_00688">
    <property type="entry name" value="Leu_Phe_trans"/>
    <property type="match status" value="1"/>
</dbReference>
<dbReference type="InterPro" id="IPR016181">
    <property type="entry name" value="Acyl_CoA_acyltransferase"/>
</dbReference>
<dbReference type="InterPro" id="IPR004616">
    <property type="entry name" value="Leu/Phe-tRNA_Trfase"/>
</dbReference>
<dbReference type="InterPro" id="IPR042203">
    <property type="entry name" value="Leu/Phe-tRNA_Trfase_C"/>
</dbReference>
<dbReference type="InterPro" id="IPR042221">
    <property type="entry name" value="Leu/Phe-tRNA_Trfase_N"/>
</dbReference>
<dbReference type="NCBIfam" id="TIGR00667">
    <property type="entry name" value="aat"/>
    <property type="match status" value="1"/>
</dbReference>
<dbReference type="PANTHER" id="PTHR30098">
    <property type="entry name" value="LEUCYL/PHENYLALANYL-TRNA--PROTEIN TRANSFERASE"/>
    <property type="match status" value="1"/>
</dbReference>
<dbReference type="PANTHER" id="PTHR30098:SF2">
    <property type="entry name" value="LEUCYL_PHENYLALANYL-TRNA--PROTEIN TRANSFERASE"/>
    <property type="match status" value="1"/>
</dbReference>
<dbReference type="Pfam" id="PF03588">
    <property type="entry name" value="Leu_Phe_trans"/>
    <property type="match status" value="1"/>
</dbReference>
<dbReference type="SUPFAM" id="SSF55729">
    <property type="entry name" value="Acyl-CoA N-acyltransferases (Nat)"/>
    <property type="match status" value="1"/>
</dbReference>
<feature type="chain" id="PRO_0000258043" description="Leucyl/phenylalanyl-tRNA--protein transferase">
    <location>
        <begin position="1"/>
        <end position="233"/>
    </location>
</feature>
<reference key="1">
    <citation type="submission" date="2006-01" db="EMBL/GenBank/DDBJ databases">
        <title>Complete sequence of Anaeromyxobacter dehalogenans 2CP-C.</title>
        <authorList>
            <person name="Copeland A."/>
            <person name="Lucas S."/>
            <person name="Lapidus A."/>
            <person name="Barry K."/>
            <person name="Detter J.C."/>
            <person name="Glavina T."/>
            <person name="Hammon N."/>
            <person name="Israni S."/>
            <person name="Pitluck S."/>
            <person name="Brettin T."/>
            <person name="Bruce D."/>
            <person name="Han C."/>
            <person name="Tapia R."/>
            <person name="Gilna P."/>
            <person name="Kiss H."/>
            <person name="Schmutz J."/>
            <person name="Larimer F."/>
            <person name="Land M."/>
            <person name="Kyrpides N."/>
            <person name="Anderson I."/>
            <person name="Sanford R.A."/>
            <person name="Ritalahti K.M."/>
            <person name="Thomas H.S."/>
            <person name="Kirby J.R."/>
            <person name="Zhulin I.B."/>
            <person name="Loeffler F.E."/>
            <person name="Richardson P."/>
        </authorList>
    </citation>
    <scope>NUCLEOTIDE SEQUENCE [LARGE SCALE GENOMIC DNA]</scope>
    <source>
        <strain>2CP-C</strain>
    </source>
</reference>
<sequence>MPIFRLPREPAFPDPALAEPDGLLAVGGDLEPERLLTAYAEGIFPWFDAESPILWWSPDPRLLLDPAALHVPRSLQRTLRRGTYRVSADQAFERVIRRCAERDRPGQQGTWITAEMVEAYVRLHRLGLAHSFEAWDGDALAGGLYGVSLGAAFFGESMFADAPDASKVAFVRSVEWLRSAGVELVDCQVRTEHLVRFGAREVPRAEFLARLARALEQPTLRGRWQLEAAGPPS</sequence>